<proteinExistence type="inferred from homology"/>
<feature type="chain" id="PRO_1000186760" description="Fe/S biogenesis protein NfuA">
    <location>
        <begin position="1"/>
        <end position="194"/>
    </location>
</feature>
<feature type="binding site" evidence="1">
    <location>
        <position position="152"/>
    </location>
    <ligand>
        <name>[4Fe-4S] cluster</name>
        <dbReference type="ChEBI" id="CHEBI:49883"/>
    </ligand>
</feature>
<feature type="binding site" evidence="1">
    <location>
        <position position="155"/>
    </location>
    <ligand>
        <name>[4Fe-4S] cluster</name>
        <dbReference type="ChEBI" id="CHEBI:49883"/>
    </ligand>
</feature>
<comment type="function">
    <text evidence="1">Involved in iron-sulfur cluster biogenesis. Binds a 4Fe-4S cluster, can transfer this cluster to apoproteins, and thereby intervenes in the maturation of Fe/S proteins. Could also act as a scaffold/chaperone for damaged Fe/S proteins.</text>
</comment>
<comment type="cofactor">
    <cofactor evidence="1">
        <name>[4Fe-4S] cluster</name>
        <dbReference type="ChEBI" id="CHEBI:49883"/>
    </cofactor>
    <text evidence="1">Binds 1 [4Fe-4S] cluster per subunit. The cluster is presumably bound at the interface of two monomers.</text>
</comment>
<comment type="subunit">
    <text evidence="1">Homodimer.</text>
</comment>
<comment type="similarity">
    <text evidence="1">Belongs to the NfuA family.</text>
</comment>
<keyword id="KW-0004">4Fe-4S</keyword>
<keyword id="KW-0408">Iron</keyword>
<keyword id="KW-0411">Iron-sulfur</keyword>
<keyword id="KW-0479">Metal-binding</keyword>
<reference key="1">
    <citation type="journal article" date="2006" name="Genome Biol.">
        <title>Genomic analysis reveals that Pseudomonas aeruginosa virulence is combinatorial.</title>
        <authorList>
            <person name="Lee D.G."/>
            <person name="Urbach J.M."/>
            <person name="Wu G."/>
            <person name="Liberati N.T."/>
            <person name="Feinbaum R.L."/>
            <person name="Miyata S."/>
            <person name="Diggins L.T."/>
            <person name="He J."/>
            <person name="Saucier M."/>
            <person name="Deziel E."/>
            <person name="Friedman L."/>
            <person name="Li L."/>
            <person name="Grills G."/>
            <person name="Montgomery K."/>
            <person name="Kucherlapati R."/>
            <person name="Rahme L.G."/>
            <person name="Ausubel F.M."/>
        </authorList>
    </citation>
    <scope>NUCLEOTIDE SEQUENCE [LARGE SCALE GENOMIC DNA]</scope>
    <source>
        <strain>UCBPP-PA14</strain>
    </source>
</reference>
<organism>
    <name type="scientific">Pseudomonas aeruginosa (strain UCBPP-PA14)</name>
    <dbReference type="NCBI Taxonomy" id="208963"/>
    <lineage>
        <taxon>Bacteria</taxon>
        <taxon>Pseudomonadati</taxon>
        <taxon>Pseudomonadota</taxon>
        <taxon>Gammaproteobacteria</taxon>
        <taxon>Pseudomonadales</taxon>
        <taxon>Pseudomonadaceae</taxon>
        <taxon>Pseudomonas</taxon>
    </lineage>
</organism>
<name>NFUA_PSEAB</name>
<protein>
    <recommendedName>
        <fullName evidence="1">Fe/S biogenesis protein NfuA</fullName>
    </recommendedName>
</protein>
<dbReference type="EMBL" id="CP000438">
    <property type="protein sequence ID" value="ABJ11035.1"/>
    <property type="molecule type" value="Genomic_DNA"/>
</dbReference>
<dbReference type="RefSeq" id="WP_003088034.1">
    <property type="nucleotide sequence ID" value="NZ_CP034244.1"/>
</dbReference>
<dbReference type="SMR" id="Q02KZ2"/>
<dbReference type="GeneID" id="77221556"/>
<dbReference type="KEGG" id="pau:PA14_40630"/>
<dbReference type="PseudoCAP" id="PA14_40630"/>
<dbReference type="HOGENOM" id="CLU_094569_0_0_6"/>
<dbReference type="BioCyc" id="PAER208963:G1G74-3404-MONOMER"/>
<dbReference type="Proteomes" id="UP000000653">
    <property type="component" value="Chromosome"/>
</dbReference>
<dbReference type="GO" id="GO:0051539">
    <property type="term" value="F:4 iron, 4 sulfur cluster binding"/>
    <property type="evidence" value="ECO:0007669"/>
    <property type="project" value="UniProtKB-UniRule"/>
</dbReference>
<dbReference type="GO" id="GO:0005506">
    <property type="term" value="F:iron ion binding"/>
    <property type="evidence" value="ECO:0007669"/>
    <property type="project" value="InterPro"/>
</dbReference>
<dbReference type="GO" id="GO:0016226">
    <property type="term" value="P:iron-sulfur cluster assembly"/>
    <property type="evidence" value="ECO:0007669"/>
    <property type="project" value="UniProtKB-UniRule"/>
</dbReference>
<dbReference type="GO" id="GO:0051604">
    <property type="term" value="P:protein maturation"/>
    <property type="evidence" value="ECO:0007669"/>
    <property type="project" value="UniProtKB-UniRule"/>
</dbReference>
<dbReference type="Gene3D" id="3.30.300.130">
    <property type="entry name" value="Fe-S cluster assembly (FSCA)"/>
    <property type="match status" value="1"/>
</dbReference>
<dbReference type="Gene3D" id="2.60.300.12">
    <property type="entry name" value="HesB-like domain"/>
    <property type="match status" value="1"/>
</dbReference>
<dbReference type="HAMAP" id="MF_01637">
    <property type="entry name" value="Fe_S_biogen_NfuA"/>
    <property type="match status" value="1"/>
</dbReference>
<dbReference type="InterPro" id="IPR017726">
    <property type="entry name" value="Fe/S_biogenesis_protein_NfuA"/>
</dbReference>
<dbReference type="InterPro" id="IPR000361">
    <property type="entry name" value="FeS_biogenesis"/>
</dbReference>
<dbReference type="InterPro" id="IPR034904">
    <property type="entry name" value="FSCA_dom_sf"/>
</dbReference>
<dbReference type="InterPro" id="IPR035903">
    <property type="entry name" value="HesB-like_dom_sf"/>
</dbReference>
<dbReference type="InterPro" id="IPR001075">
    <property type="entry name" value="NIF_FeS_clus_asmbl_NifU_C"/>
</dbReference>
<dbReference type="NCBIfam" id="TIGR03341">
    <property type="entry name" value="YhgI_GntY"/>
    <property type="match status" value="1"/>
</dbReference>
<dbReference type="PANTHER" id="PTHR11178:SF51">
    <property type="entry name" value="FE_S BIOGENESIS PROTEIN NFUA"/>
    <property type="match status" value="1"/>
</dbReference>
<dbReference type="PANTHER" id="PTHR11178">
    <property type="entry name" value="IRON-SULFUR CLUSTER SCAFFOLD PROTEIN NFU-RELATED"/>
    <property type="match status" value="1"/>
</dbReference>
<dbReference type="Pfam" id="PF01521">
    <property type="entry name" value="Fe-S_biosyn"/>
    <property type="match status" value="1"/>
</dbReference>
<dbReference type="Pfam" id="PF01106">
    <property type="entry name" value="NifU"/>
    <property type="match status" value="1"/>
</dbReference>
<dbReference type="SUPFAM" id="SSF117916">
    <property type="entry name" value="Fe-S cluster assembly (FSCA) domain-like"/>
    <property type="match status" value="1"/>
</dbReference>
<dbReference type="SUPFAM" id="SSF89360">
    <property type="entry name" value="HesB-like domain"/>
    <property type="match status" value="1"/>
</dbReference>
<evidence type="ECO:0000255" key="1">
    <source>
        <dbReference type="HAMAP-Rule" id="MF_01637"/>
    </source>
</evidence>
<accession>Q02KZ2</accession>
<sequence>MSAITITEAAQAYLAELLEKQSTPGIGIRIFITQPGTQYAETCIAYCKPGEEKVEDTAIALKDFTAWIDAVSEPFLEDAVVDYATDRMGGQLTIKAPNAKVPMVNEDSPITERINYYLQTEINPGLASHGGQVSLVDVVEDNIAVLRFGGGCQGCGMVDMTLKDGVEKTLIERIPELKGVRDVTDHSNKENAYY</sequence>
<gene>
    <name evidence="1" type="primary">nfuA</name>
    <name type="ordered locus">PA14_40630</name>
</gene>